<evidence type="ECO:0000255" key="1">
    <source>
        <dbReference type="HAMAP-Rule" id="MF_00051"/>
    </source>
</evidence>
<accession>Q5WB66</accession>
<proteinExistence type="inferred from homology"/>
<protein>
    <recommendedName>
        <fullName evidence="1">Serine hydroxymethyltransferase</fullName>
        <shortName evidence="1">SHMT</shortName>
        <shortName evidence="1">Serine methylase</shortName>
        <ecNumber evidence="1">2.1.2.1</ecNumber>
    </recommendedName>
</protein>
<keyword id="KW-0028">Amino-acid biosynthesis</keyword>
<keyword id="KW-0963">Cytoplasm</keyword>
<keyword id="KW-0554">One-carbon metabolism</keyword>
<keyword id="KW-0663">Pyridoxal phosphate</keyword>
<keyword id="KW-1185">Reference proteome</keyword>
<keyword id="KW-0808">Transferase</keyword>
<organism>
    <name type="scientific">Shouchella clausii (strain KSM-K16)</name>
    <name type="common">Alkalihalobacillus clausii</name>
    <dbReference type="NCBI Taxonomy" id="66692"/>
    <lineage>
        <taxon>Bacteria</taxon>
        <taxon>Bacillati</taxon>
        <taxon>Bacillota</taxon>
        <taxon>Bacilli</taxon>
        <taxon>Bacillales</taxon>
        <taxon>Bacillaceae</taxon>
        <taxon>Shouchella</taxon>
    </lineage>
</organism>
<feature type="chain" id="PRO_0000113531" description="Serine hydroxymethyltransferase">
    <location>
        <begin position="1"/>
        <end position="417"/>
    </location>
</feature>
<feature type="binding site" evidence="1">
    <location>
        <position position="117"/>
    </location>
    <ligand>
        <name>(6S)-5,6,7,8-tetrahydrofolate</name>
        <dbReference type="ChEBI" id="CHEBI:57453"/>
    </ligand>
</feature>
<feature type="binding site" evidence="1">
    <location>
        <begin position="121"/>
        <end position="123"/>
    </location>
    <ligand>
        <name>(6S)-5,6,7,8-tetrahydrofolate</name>
        <dbReference type="ChEBI" id="CHEBI:57453"/>
    </ligand>
</feature>
<feature type="site" description="Plays an important role in substrate specificity" evidence="1">
    <location>
        <position position="225"/>
    </location>
</feature>
<feature type="modified residue" description="N6-(pyridoxal phosphate)lysine" evidence="1">
    <location>
        <position position="226"/>
    </location>
</feature>
<dbReference type="EC" id="2.1.2.1" evidence="1"/>
<dbReference type="EMBL" id="AP006627">
    <property type="protein sequence ID" value="BAD66394.1"/>
    <property type="molecule type" value="Genomic_DNA"/>
</dbReference>
<dbReference type="RefSeq" id="WP_011248697.1">
    <property type="nucleotide sequence ID" value="NC_006582.1"/>
</dbReference>
<dbReference type="SMR" id="Q5WB66"/>
<dbReference type="STRING" id="66692.ABC3863"/>
<dbReference type="KEGG" id="bcl:ABC3863"/>
<dbReference type="eggNOG" id="COG0112">
    <property type="taxonomic scope" value="Bacteria"/>
</dbReference>
<dbReference type="HOGENOM" id="CLU_022477_2_1_9"/>
<dbReference type="OrthoDB" id="9803846at2"/>
<dbReference type="UniPathway" id="UPA00193"/>
<dbReference type="UniPathway" id="UPA00288">
    <property type="reaction ID" value="UER01023"/>
</dbReference>
<dbReference type="Proteomes" id="UP000001168">
    <property type="component" value="Chromosome"/>
</dbReference>
<dbReference type="GO" id="GO:0005829">
    <property type="term" value="C:cytosol"/>
    <property type="evidence" value="ECO:0007669"/>
    <property type="project" value="TreeGrafter"/>
</dbReference>
<dbReference type="GO" id="GO:0004372">
    <property type="term" value="F:glycine hydroxymethyltransferase activity"/>
    <property type="evidence" value="ECO:0007669"/>
    <property type="project" value="UniProtKB-UniRule"/>
</dbReference>
<dbReference type="GO" id="GO:0030170">
    <property type="term" value="F:pyridoxal phosphate binding"/>
    <property type="evidence" value="ECO:0007669"/>
    <property type="project" value="UniProtKB-UniRule"/>
</dbReference>
<dbReference type="GO" id="GO:0019264">
    <property type="term" value="P:glycine biosynthetic process from serine"/>
    <property type="evidence" value="ECO:0007669"/>
    <property type="project" value="UniProtKB-UniRule"/>
</dbReference>
<dbReference type="GO" id="GO:0035999">
    <property type="term" value="P:tetrahydrofolate interconversion"/>
    <property type="evidence" value="ECO:0007669"/>
    <property type="project" value="UniProtKB-UniRule"/>
</dbReference>
<dbReference type="CDD" id="cd00378">
    <property type="entry name" value="SHMT"/>
    <property type="match status" value="1"/>
</dbReference>
<dbReference type="FunFam" id="3.40.640.10:FF:000001">
    <property type="entry name" value="Serine hydroxymethyltransferase"/>
    <property type="match status" value="1"/>
</dbReference>
<dbReference type="FunFam" id="3.90.1150.10:FF:000003">
    <property type="entry name" value="Serine hydroxymethyltransferase"/>
    <property type="match status" value="1"/>
</dbReference>
<dbReference type="Gene3D" id="3.90.1150.10">
    <property type="entry name" value="Aspartate Aminotransferase, domain 1"/>
    <property type="match status" value="1"/>
</dbReference>
<dbReference type="Gene3D" id="3.40.640.10">
    <property type="entry name" value="Type I PLP-dependent aspartate aminotransferase-like (Major domain)"/>
    <property type="match status" value="1"/>
</dbReference>
<dbReference type="HAMAP" id="MF_00051">
    <property type="entry name" value="SHMT"/>
    <property type="match status" value="1"/>
</dbReference>
<dbReference type="InterPro" id="IPR015424">
    <property type="entry name" value="PyrdxlP-dep_Trfase"/>
</dbReference>
<dbReference type="InterPro" id="IPR015421">
    <property type="entry name" value="PyrdxlP-dep_Trfase_major"/>
</dbReference>
<dbReference type="InterPro" id="IPR015422">
    <property type="entry name" value="PyrdxlP-dep_Trfase_small"/>
</dbReference>
<dbReference type="InterPro" id="IPR001085">
    <property type="entry name" value="Ser_HO-MeTrfase"/>
</dbReference>
<dbReference type="InterPro" id="IPR049943">
    <property type="entry name" value="Ser_HO-MeTrfase-like"/>
</dbReference>
<dbReference type="InterPro" id="IPR019798">
    <property type="entry name" value="Ser_HO-MeTrfase_PLP_BS"/>
</dbReference>
<dbReference type="InterPro" id="IPR039429">
    <property type="entry name" value="SHMT-like_dom"/>
</dbReference>
<dbReference type="NCBIfam" id="NF000586">
    <property type="entry name" value="PRK00011.1"/>
    <property type="match status" value="1"/>
</dbReference>
<dbReference type="PANTHER" id="PTHR11680">
    <property type="entry name" value="SERINE HYDROXYMETHYLTRANSFERASE"/>
    <property type="match status" value="1"/>
</dbReference>
<dbReference type="PANTHER" id="PTHR11680:SF35">
    <property type="entry name" value="SERINE HYDROXYMETHYLTRANSFERASE 1"/>
    <property type="match status" value="1"/>
</dbReference>
<dbReference type="Pfam" id="PF00464">
    <property type="entry name" value="SHMT"/>
    <property type="match status" value="1"/>
</dbReference>
<dbReference type="PIRSF" id="PIRSF000412">
    <property type="entry name" value="SHMT"/>
    <property type="match status" value="1"/>
</dbReference>
<dbReference type="SUPFAM" id="SSF53383">
    <property type="entry name" value="PLP-dependent transferases"/>
    <property type="match status" value="1"/>
</dbReference>
<dbReference type="PROSITE" id="PS00096">
    <property type="entry name" value="SHMT"/>
    <property type="match status" value="1"/>
</dbReference>
<reference key="1">
    <citation type="submission" date="2003-10" db="EMBL/GenBank/DDBJ databases">
        <title>The complete genome sequence of the alkaliphilic Bacillus clausii KSM-K16.</title>
        <authorList>
            <person name="Takaki Y."/>
            <person name="Kageyama Y."/>
            <person name="Shimamura S."/>
            <person name="Suzuki H."/>
            <person name="Nishi S."/>
            <person name="Hatada Y."/>
            <person name="Kawai S."/>
            <person name="Ito S."/>
            <person name="Horikoshi K."/>
        </authorList>
    </citation>
    <scope>NUCLEOTIDE SEQUENCE [LARGE SCALE GENOMIC DNA]</scope>
    <source>
        <strain>KSM-K16</strain>
    </source>
</reference>
<gene>
    <name evidence="1" type="primary">glyA</name>
    <name type="ordered locus">ABC3863</name>
</gene>
<name>GLYA_SHOC1</name>
<comment type="function">
    <text evidence="1">Catalyzes the reversible interconversion of serine and glycine with tetrahydrofolate (THF) serving as the one-carbon carrier. This reaction serves as the major source of one-carbon groups required for the biosynthesis of purines, thymidylate, methionine, and other important biomolecules. Also exhibits THF-independent aldolase activity toward beta-hydroxyamino acids, producing glycine and aldehydes, via a retro-aldol mechanism.</text>
</comment>
<comment type="catalytic activity">
    <reaction evidence="1">
        <text>(6R)-5,10-methylene-5,6,7,8-tetrahydrofolate + glycine + H2O = (6S)-5,6,7,8-tetrahydrofolate + L-serine</text>
        <dbReference type="Rhea" id="RHEA:15481"/>
        <dbReference type="ChEBI" id="CHEBI:15377"/>
        <dbReference type="ChEBI" id="CHEBI:15636"/>
        <dbReference type="ChEBI" id="CHEBI:33384"/>
        <dbReference type="ChEBI" id="CHEBI:57305"/>
        <dbReference type="ChEBI" id="CHEBI:57453"/>
        <dbReference type="EC" id="2.1.2.1"/>
    </reaction>
</comment>
<comment type="cofactor">
    <cofactor evidence="1">
        <name>pyridoxal 5'-phosphate</name>
        <dbReference type="ChEBI" id="CHEBI:597326"/>
    </cofactor>
</comment>
<comment type="pathway">
    <text evidence="1">One-carbon metabolism; tetrahydrofolate interconversion.</text>
</comment>
<comment type="pathway">
    <text evidence="1">Amino-acid biosynthesis; glycine biosynthesis; glycine from L-serine: step 1/1.</text>
</comment>
<comment type="subunit">
    <text evidence="1">Homodimer.</text>
</comment>
<comment type="subcellular location">
    <subcellularLocation>
        <location evidence="1">Cytoplasm</location>
    </subcellularLocation>
</comment>
<comment type="similarity">
    <text evidence="1">Belongs to the SHMT family.</text>
</comment>
<sequence length="417" mass="45583">MEHLKTQDPAVFEAIRQELGRQRDKIELIASENFVSEAVMEAQGSVLTNKYAEGYPGRRYYGGCEYVDIAEDVARDRAKQLFGAAYVNVQPHSGAQANMGVYFTILEHGDTVLGMNLSHGGHLTHGSPVNFSGIQYRFVEYGVREDDKRIDYEAVREAAKTHQPKLIVAGASAYPREIDFKKFREIADEVGAYLMVDMAHIAGLVAAGLHQNPVPYAHFVTTTTHKTLRGPRGGMILCNEETAEEFGKKLDKSIFPGIQGGPLMHVIAAKAVAFGEALSDEFKTYAKQIIANAKRLGEKLQAEGVDIVSGGTDNHLLLLDLRSLQLTGKVAEKALDAVGITTNKNAIPFDPEKPFVTSGIRIGTAAVTSRGFGENEMDEIGELIALTLKNIDNEEALNSVRSRVAALTKTFPMYPNL</sequence>